<evidence type="ECO:0000255" key="1">
    <source>
        <dbReference type="HAMAP-Rule" id="MF_00059"/>
    </source>
</evidence>
<keyword id="KW-0240">DNA-directed RNA polymerase</keyword>
<keyword id="KW-0548">Nucleotidyltransferase</keyword>
<keyword id="KW-0804">Transcription</keyword>
<keyword id="KW-0808">Transferase</keyword>
<dbReference type="EC" id="2.7.7.6" evidence="1"/>
<dbReference type="EMBL" id="CP000738">
    <property type="protein sequence ID" value="ABR59863.1"/>
    <property type="molecule type" value="Genomic_DNA"/>
</dbReference>
<dbReference type="RefSeq" id="WP_003536494.1">
    <property type="nucleotide sequence ID" value="NC_009636.1"/>
</dbReference>
<dbReference type="RefSeq" id="YP_001326698.1">
    <property type="nucleotide sequence ID" value="NC_009636.1"/>
</dbReference>
<dbReference type="SMR" id="A6U883"/>
<dbReference type="STRING" id="366394.Smed_1010"/>
<dbReference type="KEGG" id="smd:Smed_1010"/>
<dbReference type="PATRIC" id="fig|366394.8.peg.4131"/>
<dbReference type="eggNOG" id="COG0202">
    <property type="taxonomic scope" value="Bacteria"/>
</dbReference>
<dbReference type="HOGENOM" id="CLU_053084_0_0_5"/>
<dbReference type="OrthoDB" id="9805706at2"/>
<dbReference type="Proteomes" id="UP000001108">
    <property type="component" value="Chromosome"/>
</dbReference>
<dbReference type="GO" id="GO:0005737">
    <property type="term" value="C:cytoplasm"/>
    <property type="evidence" value="ECO:0007669"/>
    <property type="project" value="UniProtKB-ARBA"/>
</dbReference>
<dbReference type="GO" id="GO:0000428">
    <property type="term" value="C:DNA-directed RNA polymerase complex"/>
    <property type="evidence" value="ECO:0007669"/>
    <property type="project" value="UniProtKB-KW"/>
</dbReference>
<dbReference type="GO" id="GO:0003677">
    <property type="term" value="F:DNA binding"/>
    <property type="evidence" value="ECO:0007669"/>
    <property type="project" value="UniProtKB-UniRule"/>
</dbReference>
<dbReference type="GO" id="GO:0003899">
    <property type="term" value="F:DNA-directed RNA polymerase activity"/>
    <property type="evidence" value="ECO:0007669"/>
    <property type="project" value="UniProtKB-UniRule"/>
</dbReference>
<dbReference type="GO" id="GO:0046983">
    <property type="term" value="F:protein dimerization activity"/>
    <property type="evidence" value="ECO:0007669"/>
    <property type="project" value="InterPro"/>
</dbReference>
<dbReference type="GO" id="GO:0006351">
    <property type="term" value="P:DNA-templated transcription"/>
    <property type="evidence" value="ECO:0007669"/>
    <property type="project" value="UniProtKB-UniRule"/>
</dbReference>
<dbReference type="CDD" id="cd06928">
    <property type="entry name" value="RNAP_alpha_NTD"/>
    <property type="match status" value="1"/>
</dbReference>
<dbReference type="FunFam" id="1.10.150.20:FF:000001">
    <property type="entry name" value="DNA-directed RNA polymerase subunit alpha"/>
    <property type="match status" value="1"/>
</dbReference>
<dbReference type="FunFam" id="2.170.120.12:FF:000001">
    <property type="entry name" value="DNA-directed RNA polymerase subunit alpha"/>
    <property type="match status" value="1"/>
</dbReference>
<dbReference type="Gene3D" id="1.10.150.20">
    <property type="entry name" value="5' to 3' exonuclease, C-terminal subdomain"/>
    <property type="match status" value="1"/>
</dbReference>
<dbReference type="Gene3D" id="2.170.120.12">
    <property type="entry name" value="DNA-directed RNA polymerase, insert domain"/>
    <property type="match status" value="1"/>
</dbReference>
<dbReference type="Gene3D" id="3.30.1360.10">
    <property type="entry name" value="RNA polymerase, RBP11-like subunit"/>
    <property type="match status" value="1"/>
</dbReference>
<dbReference type="HAMAP" id="MF_00059">
    <property type="entry name" value="RNApol_bact_RpoA"/>
    <property type="match status" value="1"/>
</dbReference>
<dbReference type="InterPro" id="IPR011262">
    <property type="entry name" value="DNA-dir_RNA_pol_insert"/>
</dbReference>
<dbReference type="InterPro" id="IPR011263">
    <property type="entry name" value="DNA-dir_RNA_pol_RpoA/D/Rpb3"/>
</dbReference>
<dbReference type="InterPro" id="IPR011773">
    <property type="entry name" value="DNA-dir_RpoA"/>
</dbReference>
<dbReference type="InterPro" id="IPR036603">
    <property type="entry name" value="RBP11-like"/>
</dbReference>
<dbReference type="InterPro" id="IPR011260">
    <property type="entry name" value="RNAP_asu_C"/>
</dbReference>
<dbReference type="InterPro" id="IPR036643">
    <property type="entry name" value="RNApol_insert_sf"/>
</dbReference>
<dbReference type="NCBIfam" id="NF003513">
    <property type="entry name" value="PRK05182.1-2"/>
    <property type="match status" value="1"/>
</dbReference>
<dbReference type="NCBIfam" id="NF003519">
    <property type="entry name" value="PRK05182.2-5"/>
    <property type="match status" value="1"/>
</dbReference>
<dbReference type="NCBIfam" id="TIGR02027">
    <property type="entry name" value="rpoA"/>
    <property type="match status" value="1"/>
</dbReference>
<dbReference type="Pfam" id="PF01000">
    <property type="entry name" value="RNA_pol_A_bac"/>
    <property type="match status" value="1"/>
</dbReference>
<dbReference type="Pfam" id="PF03118">
    <property type="entry name" value="RNA_pol_A_CTD"/>
    <property type="match status" value="1"/>
</dbReference>
<dbReference type="Pfam" id="PF01193">
    <property type="entry name" value="RNA_pol_L"/>
    <property type="match status" value="1"/>
</dbReference>
<dbReference type="SMART" id="SM00662">
    <property type="entry name" value="RPOLD"/>
    <property type="match status" value="1"/>
</dbReference>
<dbReference type="SUPFAM" id="SSF47789">
    <property type="entry name" value="C-terminal domain of RNA polymerase alpha subunit"/>
    <property type="match status" value="1"/>
</dbReference>
<dbReference type="SUPFAM" id="SSF56553">
    <property type="entry name" value="Insert subdomain of RNA polymerase alpha subunit"/>
    <property type="match status" value="1"/>
</dbReference>
<dbReference type="SUPFAM" id="SSF55257">
    <property type="entry name" value="RBP11-like subunits of RNA polymerase"/>
    <property type="match status" value="1"/>
</dbReference>
<comment type="function">
    <text evidence="1">DNA-dependent RNA polymerase catalyzes the transcription of DNA into RNA using the four ribonucleoside triphosphates as substrates.</text>
</comment>
<comment type="catalytic activity">
    <reaction evidence="1">
        <text>RNA(n) + a ribonucleoside 5'-triphosphate = RNA(n+1) + diphosphate</text>
        <dbReference type="Rhea" id="RHEA:21248"/>
        <dbReference type="Rhea" id="RHEA-COMP:14527"/>
        <dbReference type="Rhea" id="RHEA-COMP:17342"/>
        <dbReference type="ChEBI" id="CHEBI:33019"/>
        <dbReference type="ChEBI" id="CHEBI:61557"/>
        <dbReference type="ChEBI" id="CHEBI:140395"/>
        <dbReference type="EC" id="2.7.7.6"/>
    </reaction>
</comment>
<comment type="subunit">
    <text evidence="1">Homodimer. The RNAP catalytic core consists of 2 alpha, 1 beta, 1 beta' and 1 omega subunit. When a sigma factor is associated with the core the holoenzyme is formed, which can initiate transcription.</text>
</comment>
<comment type="domain">
    <text evidence="1">The N-terminal domain is essential for RNAP assembly and basal transcription, whereas the C-terminal domain is involved in interaction with transcriptional regulators and with upstream promoter elements.</text>
</comment>
<comment type="similarity">
    <text evidence="1">Belongs to the RNA polymerase alpha chain family.</text>
</comment>
<name>RPOA_SINMW</name>
<organism>
    <name type="scientific">Sinorhizobium medicae (strain WSM419)</name>
    <name type="common">Ensifer medicae</name>
    <dbReference type="NCBI Taxonomy" id="366394"/>
    <lineage>
        <taxon>Bacteria</taxon>
        <taxon>Pseudomonadati</taxon>
        <taxon>Pseudomonadota</taxon>
        <taxon>Alphaproteobacteria</taxon>
        <taxon>Hyphomicrobiales</taxon>
        <taxon>Rhizobiaceae</taxon>
        <taxon>Sinorhizobium/Ensifer group</taxon>
        <taxon>Sinorhizobium</taxon>
    </lineage>
</organism>
<protein>
    <recommendedName>
        <fullName evidence="1">DNA-directed RNA polymerase subunit alpha</fullName>
        <shortName evidence="1">RNAP subunit alpha</shortName>
        <ecNumber evidence="1">2.7.7.6</ecNumber>
    </recommendedName>
    <alternativeName>
        <fullName evidence="1">RNA polymerase subunit alpha</fullName>
    </alternativeName>
    <alternativeName>
        <fullName evidence="1">Transcriptase subunit alpha</fullName>
    </alternativeName>
</protein>
<sequence length="336" mass="37171">MIQKNWQELIKPNKVEFASSGRTKATLVAEPLERGFGLTLGNALRRVLLSSLRGAAVTAVQIDGVLHEFSSIPGVREDVTDIVLNIKEIAIKMDGDDAKRMVVRKQGPGVVTAGDIQTVGDIEILNPNHVICTLDEGAEIRMEFTVNNGKGYVPADRNRSEDAPIGLIPVDSLYSPVKKVSYKVENTREGQVLDYDKLTMSIETDGSVTGEDAIAFAARILQDQLSVFVNFDEPQKETEEEAVTELAFNPALLKKVDELELSVRSANCLKNDNIVYIGDLIQKTEAEMLRTPNFGRKSLNEIKEVLASMGLHLGMEVPSWPPENIEDLAKRYEDQY</sequence>
<feature type="chain" id="PRO_1000007695" description="DNA-directed RNA polymerase subunit alpha">
    <location>
        <begin position="1"/>
        <end position="336"/>
    </location>
</feature>
<feature type="region of interest" description="Alpha N-terminal domain (alpha-NTD)" evidence="1">
    <location>
        <begin position="1"/>
        <end position="232"/>
    </location>
</feature>
<feature type="region of interest" description="Alpha C-terminal domain (alpha-CTD)" evidence="1">
    <location>
        <begin position="248"/>
        <end position="336"/>
    </location>
</feature>
<accession>A6U883</accession>
<gene>
    <name evidence="1" type="primary">rpoA</name>
    <name type="ordered locus">Smed_1010</name>
</gene>
<proteinExistence type="inferred from homology"/>
<reference key="1">
    <citation type="submission" date="2007-06" db="EMBL/GenBank/DDBJ databases">
        <title>Complete sequence of Sinorhizobium medicae WSM419 chromosome.</title>
        <authorList>
            <consortium name="US DOE Joint Genome Institute"/>
            <person name="Copeland A."/>
            <person name="Lucas S."/>
            <person name="Lapidus A."/>
            <person name="Barry K."/>
            <person name="Glavina del Rio T."/>
            <person name="Dalin E."/>
            <person name="Tice H."/>
            <person name="Pitluck S."/>
            <person name="Chain P."/>
            <person name="Malfatti S."/>
            <person name="Shin M."/>
            <person name="Vergez L."/>
            <person name="Schmutz J."/>
            <person name="Larimer F."/>
            <person name="Land M."/>
            <person name="Hauser L."/>
            <person name="Kyrpides N."/>
            <person name="Mikhailova N."/>
            <person name="Reeve W.G."/>
            <person name="Richardson P."/>
        </authorList>
    </citation>
    <scope>NUCLEOTIDE SEQUENCE [LARGE SCALE GENOMIC DNA]</scope>
    <source>
        <strain>WSM419</strain>
    </source>
</reference>